<comment type="function">
    <text evidence="2">Cell wall formation.</text>
</comment>
<comment type="catalytic activity">
    <reaction evidence="2">
        <text>2 D-alanine + ATP = D-alanyl-D-alanine + ADP + phosphate + H(+)</text>
        <dbReference type="Rhea" id="RHEA:11224"/>
        <dbReference type="ChEBI" id="CHEBI:15378"/>
        <dbReference type="ChEBI" id="CHEBI:30616"/>
        <dbReference type="ChEBI" id="CHEBI:43474"/>
        <dbReference type="ChEBI" id="CHEBI:57416"/>
        <dbReference type="ChEBI" id="CHEBI:57822"/>
        <dbReference type="ChEBI" id="CHEBI:456216"/>
        <dbReference type="EC" id="6.3.2.4"/>
    </reaction>
</comment>
<comment type="cofactor">
    <cofactor evidence="1">
        <name>Mg(2+)</name>
        <dbReference type="ChEBI" id="CHEBI:18420"/>
    </cofactor>
    <cofactor evidence="1">
        <name>Mn(2+)</name>
        <dbReference type="ChEBI" id="CHEBI:29035"/>
    </cofactor>
    <text evidence="1">Binds 2 magnesium or manganese ions per subunit.</text>
</comment>
<comment type="pathway">
    <text evidence="2">Cell wall biogenesis; peptidoglycan biosynthesis.</text>
</comment>
<comment type="subcellular location">
    <subcellularLocation>
        <location evidence="2">Cytoplasm</location>
    </subcellularLocation>
</comment>
<comment type="similarity">
    <text evidence="2">Belongs to the D-alanine--D-alanine ligase family.</text>
</comment>
<keyword id="KW-0067">ATP-binding</keyword>
<keyword id="KW-0133">Cell shape</keyword>
<keyword id="KW-0961">Cell wall biogenesis/degradation</keyword>
<keyword id="KW-0963">Cytoplasm</keyword>
<keyword id="KW-0436">Ligase</keyword>
<keyword id="KW-0460">Magnesium</keyword>
<keyword id="KW-0464">Manganese</keyword>
<keyword id="KW-0479">Metal-binding</keyword>
<keyword id="KW-0547">Nucleotide-binding</keyword>
<keyword id="KW-0573">Peptidoglycan synthesis</keyword>
<evidence type="ECO:0000250" key="1"/>
<evidence type="ECO:0000255" key="2">
    <source>
        <dbReference type="HAMAP-Rule" id="MF_00047"/>
    </source>
</evidence>
<gene>
    <name evidence="2" type="primary">ddl</name>
    <name type="ordered locus">Bcen_0079</name>
</gene>
<feature type="chain" id="PRO_0000341067" description="D-alanine--D-alanine ligase">
    <location>
        <begin position="1"/>
        <end position="313"/>
    </location>
</feature>
<feature type="domain" description="ATP-grasp" evidence="2">
    <location>
        <begin position="108"/>
        <end position="308"/>
    </location>
</feature>
<feature type="binding site" evidence="2">
    <location>
        <begin position="138"/>
        <end position="193"/>
    </location>
    <ligand>
        <name>ATP</name>
        <dbReference type="ChEBI" id="CHEBI:30616"/>
    </ligand>
</feature>
<feature type="binding site" evidence="2">
    <location>
        <position position="262"/>
    </location>
    <ligand>
        <name>Mg(2+)</name>
        <dbReference type="ChEBI" id="CHEBI:18420"/>
        <label>1</label>
    </ligand>
</feature>
<feature type="binding site" evidence="2">
    <location>
        <position position="275"/>
    </location>
    <ligand>
        <name>Mg(2+)</name>
        <dbReference type="ChEBI" id="CHEBI:18420"/>
        <label>1</label>
    </ligand>
</feature>
<feature type="binding site" evidence="2">
    <location>
        <position position="275"/>
    </location>
    <ligand>
        <name>Mg(2+)</name>
        <dbReference type="ChEBI" id="CHEBI:18420"/>
        <label>2</label>
    </ligand>
</feature>
<feature type="binding site" evidence="2">
    <location>
        <position position="277"/>
    </location>
    <ligand>
        <name>Mg(2+)</name>
        <dbReference type="ChEBI" id="CHEBI:18420"/>
        <label>2</label>
    </ligand>
</feature>
<dbReference type="EC" id="6.3.2.4" evidence="2"/>
<dbReference type="EMBL" id="CP000378">
    <property type="protein sequence ID" value="ABF74994.1"/>
    <property type="molecule type" value="Genomic_DNA"/>
</dbReference>
<dbReference type="SMR" id="Q1BZG1"/>
<dbReference type="HOGENOM" id="CLU_039268_1_2_4"/>
<dbReference type="UniPathway" id="UPA00219"/>
<dbReference type="GO" id="GO:0005829">
    <property type="term" value="C:cytosol"/>
    <property type="evidence" value="ECO:0007669"/>
    <property type="project" value="TreeGrafter"/>
</dbReference>
<dbReference type="GO" id="GO:0005524">
    <property type="term" value="F:ATP binding"/>
    <property type="evidence" value="ECO:0007669"/>
    <property type="project" value="UniProtKB-KW"/>
</dbReference>
<dbReference type="GO" id="GO:0008716">
    <property type="term" value="F:D-alanine-D-alanine ligase activity"/>
    <property type="evidence" value="ECO:0007669"/>
    <property type="project" value="UniProtKB-UniRule"/>
</dbReference>
<dbReference type="GO" id="GO:0046872">
    <property type="term" value="F:metal ion binding"/>
    <property type="evidence" value="ECO:0007669"/>
    <property type="project" value="UniProtKB-KW"/>
</dbReference>
<dbReference type="GO" id="GO:0071555">
    <property type="term" value="P:cell wall organization"/>
    <property type="evidence" value="ECO:0007669"/>
    <property type="project" value="UniProtKB-KW"/>
</dbReference>
<dbReference type="GO" id="GO:0009252">
    <property type="term" value="P:peptidoglycan biosynthetic process"/>
    <property type="evidence" value="ECO:0007669"/>
    <property type="project" value="UniProtKB-UniRule"/>
</dbReference>
<dbReference type="GO" id="GO:0008360">
    <property type="term" value="P:regulation of cell shape"/>
    <property type="evidence" value="ECO:0007669"/>
    <property type="project" value="UniProtKB-KW"/>
</dbReference>
<dbReference type="FunFam" id="3.30.1490.20:FF:000007">
    <property type="entry name" value="D-alanine--D-alanine ligase"/>
    <property type="match status" value="1"/>
</dbReference>
<dbReference type="FunFam" id="3.30.470.20:FF:000008">
    <property type="entry name" value="D-alanine--D-alanine ligase"/>
    <property type="match status" value="1"/>
</dbReference>
<dbReference type="FunFam" id="3.40.50.20:FF:000013">
    <property type="entry name" value="D-alanine--D-alanine ligase"/>
    <property type="match status" value="1"/>
</dbReference>
<dbReference type="Gene3D" id="3.40.50.20">
    <property type="match status" value="1"/>
</dbReference>
<dbReference type="Gene3D" id="3.30.1490.20">
    <property type="entry name" value="ATP-grasp fold, A domain"/>
    <property type="match status" value="1"/>
</dbReference>
<dbReference type="Gene3D" id="3.30.470.20">
    <property type="entry name" value="ATP-grasp fold, B domain"/>
    <property type="match status" value="1"/>
</dbReference>
<dbReference type="HAMAP" id="MF_00047">
    <property type="entry name" value="Dala_Dala_lig"/>
    <property type="match status" value="1"/>
</dbReference>
<dbReference type="InterPro" id="IPR011761">
    <property type="entry name" value="ATP-grasp"/>
</dbReference>
<dbReference type="InterPro" id="IPR013815">
    <property type="entry name" value="ATP_grasp_subdomain_1"/>
</dbReference>
<dbReference type="InterPro" id="IPR000291">
    <property type="entry name" value="D-Ala_lig_Van_CS"/>
</dbReference>
<dbReference type="InterPro" id="IPR005905">
    <property type="entry name" value="D_ala_D_ala"/>
</dbReference>
<dbReference type="InterPro" id="IPR011095">
    <property type="entry name" value="Dala_Dala_lig_C"/>
</dbReference>
<dbReference type="InterPro" id="IPR011127">
    <property type="entry name" value="Dala_Dala_lig_N"/>
</dbReference>
<dbReference type="InterPro" id="IPR016185">
    <property type="entry name" value="PreATP-grasp_dom_sf"/>
</dbReference>
<dbReference type="NCBIfam" id="TIGR01205">
    <property type="entry name" value="D_ala_D_alaTIGR"/>
    <property type="match status" value="1"/>
</dbReference>
<dbReference type="NCBIfam" id="NF002378">
    <property type="entry name" value="PRK01372.1"/>
    <property type="match status" value="1"/>
</dbReference>
<dbReference type="PANTHER" id="PTHR23132">
    <property type="entry name" value="D-ALANINE--D-ALANINE LIGASE"/>
    <property type="match status" value="1"/>
</dbReference>
<dbReference type="PANTHER" id="PTHR23132:SF23">
    <property type="entry name" value="D-ALANINE--D-ALANINE LIGASE B"/>
    <property type="match status" value="1"/>
</dbReference>
<dbReference type="Pfam" id="PF07478">
    <property type="entry name" value="Dala_Dala_lig_C"/>
    <property type="match status" value="1"/>
</dbReference>
<dbReference type="Pfam" id="PF01820">
    <property type="entry name" value="Dala_Dala_lig_N"/>
    <property type="match status" value="1"/>
</dbReference>
<dbReference type="PIRSF" id="PIRSF039102">
    <property type="entry name" value="Ddl/VanB"/>
    <property type="match status" value="1"/>
</dbReference>
<dbReference type="SUPFAM" id="SSF56059">
    <property type="entry name" value="Glutathione synthetase ATP-binding domain-like"/>
    <property type="match status" value="1"/>
</dbReference>
<dbReference type="SUPFAM" id="SSF52440">
    <property type="entry name" value="PreATP-grasp domain"/>
    <property type="match status" value="1"/>
</dbReference>
<dbReference type="PROSITE" id="PS50975">
    <property type="entry name" value="ATP_GRASP"/>
    <property type="match status" value="1"/>
</dbReference>
<dbReference type="PROSITE" id="PS00843">
    <property type="entry name" value="DALA_DALA_LIGASE_1"/>
    <property type="match status" value="1"/>
</dbReference>
<dbReference type="PROSITE" id="PS00844">
    <property type="entry name" value="DALA_DALA_LIGASE_2"/>
    <property type="match status" value="1"/>
</dbReference>
<name>DDL_BURO1</name>
<protein>
    <recommendedName>
        <fullName evidence="2">D-alanine--D-alanine ligase</fullName>
        <ecNumber evidence="2">6.3.2.4</ecNumber>
    </recommendedName>
    <alternativeName>
        <fullName evidence="2">D-Ala-D-Ala ligase</fullName>
    </alternativeName>
    <alternativeName>
        <fullName evidence="2">D-alanylalanine synthetase</fullName>
    </alternativeName>
</protein>
<organism>
    <name type="scientific">Burkholderia orbicola (strain AU 1054)</name>
    <dbReference type="NCBI Taxonomy" id="331271"/>
    <lineage>
        <taxon>Bacteria</taxon>
        <taxon>Pseudomonadati</taxon>
        <taxon>Pseudomonadota</taxon>
        <taxon>Betaproteobacteria</taxon>
        <taxon>Burkholderiales</taxon>
        <taxon>Burkholderiaceae</taxon>
        <taxon>Burkholderia</taxon>
        <taxon>Burkholderia cepacia complex</taxon>
        <taxon>Burkholderia orbicola</taxon>
    </lineage>
</organism>
<accession>Q1BZG1</accession>
<sequence>MSGIDPKRFGKVAVLFGGESAEREVSLTSGRLVLQGLRDAGVDAHPFDPAERPLSALKDEGFVRAFNALHGGYGENGQIQGALDFYGIRYTGSGVLGSALGLDKFRTKLVWQQTGVPTPPFETVMRGDDLAARATDIVAKLGLPLFVKPASEGSSVAVLKVKTADALPAALAEAATHDKIVIVEKSIEGGGEYTACIAGDLDLPLIKIVPAGEFYDYHAKYVADDTQYLIPCGLPAEQETELKRIARRAFDVLGCTDWGRADFMLDAAGNAYFLEVNTAPGMTDHSLPPKAARAVGIGYSELVVKVLSLTLND</sequence>
<proteinExistence type="inferred from homology"/>
<reference key="1">
    <citation type="submission" date="2006-05" db="EMBL/GenBank/DDBJ databases">
        <title>Complete sequence of chromosome 1 of Burkholderia cenocepacia AU 1054.</title>
        <authorList>
            <consortium name="US DOE Joint Genome Institute"/>
            <person name="Copeland A."/>
            <person name="Lucas S."/>
            <person name="Lapidus A."/>
            <person name="Barry K."/>
            <person name="Detter J.C."/>
            <person name="Glavina del Rio T."/>
            <person name="Hammon N."/>
            <person name="Israni S."/>
            <person name="Dalin E."/>
            <person name="Tice H."/>
            <person name="Pitluck S."/>
            <person name="Chain P."/>
            <person name="Malfatti S."/>
            <person name="Shin M."/>
            <person name="Vergez L."/>
            <person name="Schmutz J."/>
            <person name="Larimer F."/>
            <person name="Land M."/>
            <person name="Hauser L."/>
            <person name="Kyrpides N."/>
            <person name="Lykidis A."/>
            <person name="LiPuma J.J."/>
            <person name="Konstantinidis K."/>
            <person name="Tiedje J.M."/>
            <person name="Richardson P."/>
        </authorList>
    </citation>
    <scope>NUCLEOTIDE SEQUENCE [LARGE SCALE GENOMIC DNA]</scope>
    <source>
        <strain>AU 1054</strain>
    </source>
</reference>